<accession>Q9G6M7</accession>
<sequence>MALTYMNMALAFTVSLLGLLMYRSHLMSSLLCLEGMMLSLFVTMSLTILNSNLVLASMIPIILLVFAACEAALGLSLLVMVSNTYGVDYVQNLNLLQC</sequence>
<geneLocation type="mitochondrion"/>
<reference key="1">
    <citation type="journal article" date="2000" name="J. Mol. Evol.">
        <title>Monophyletic origin of the order chiroptera and its phylogenetic position among mammalia, as inferred from the complete sequence of the mitochondrial DNA of a Japanese megabat, the Ryukyu flying fox (Pteropus dasymallus).</title>
        <authorList>
            <person name="Nikaido M."/>
            <person name="Harada M."/>
            <person name="Cao Y."/>
            <person name="Hasegawa M."/>
            <person name="Okada N."/>
        </authorList>
    </citation>
    <scope>NUCLEOTIDE SEQUENCE [GENOMIC DNA]</scope>
</reference>
<name>NU4LM_PTEDA</name>
<feature type="chain" id="PRO_0000275113" description="NADH-ubiquinone oxidoreductase chain 4L">
    <location>
        <begin position="1"/>
        <end position="98"/>
    </location>
</feature>
<feature type="transmembrane region" description="Helical" evidence="3">
    <location>
        <begin position="1"/>
        <end position="21"/>
    </location>
</feature>
<feature type="transmembrane region" description="Helical" evidence="3">
    <location>
        <begin position="29"/>
        <end position="49"/>
    </location>
</feature>
<feature type="transmembrane region" description="Helical" evidence="3">
    <location>
        <begin position="61"/>
        <end position="81"/>
    </location>
</feature>
<dbReference type="EC" id="7.1.1.2"/>
<dbReference type="EMBL" id="AB042770">
    <property type="protein sequence ID" value="BAB18180.1"/>
    <property type="molecule type" value="Genomic_DNA"/>
</dbReference>
<dbReference type="RefSeq" id="NP_068790.1">
    <property type="nucleotide sequence ID" value="NC_002612.1"/>
</dbReference>
<dbReference type="SMR" id="Q9G6M7"/>
<dbReference type="GeneID" id="800099"/>
<dbReference type="CTD" id="4539"/>
<dbReference type="GO" id="GO:0005743">
    <property type="term" value="C:mitochondrial inner membrane"/>
    <property type="evidence" value="ECO:0000250"/>
    <property type="project" value="UniProtKB"/>
</dbReference>
<dbReference type="GO" id="GO:0045271">
    <property type="term" value="C:respiratory chain complex I"/>
    <property type="evidence" value="ECO:0000250"/>
    <property type="project" value="UniProtKB"/>
</dbReference>
<dbReference type="GO" id="GO:0008137">
    <property type="term" value="F:NADH dehydrogenase (ubiquinone) activity"/>
    <property type="evidence" value="ECO:0000250"/>
    <property type="project" value="UniProtKB"/>
</dbReference>
<dbReference type="GO" id="GO:0042773">
    <property type="term" value="P:ATP synthesis coupled electron transport"/>
    <property type="evidence" value="ECO:0007669"/>
    <property type="project" value="InterPro"/>
</dbReference>
<dbReference type="FunFam" id="1.10.287.3510:FF:000002">
    <property type="entry name" value="NADH-ubiquinone oxidoreductase chain 4L"/>
    <property type="match status" value="1"/>
</dbReference>
<dbReference type="Gene3D" id="1.10.287.3510">
    <property type="match status" value="1"/>
</dbReference>
<dbReference type="InterPro" id="IPR001133">
    <property type="entry name" value="NADH_UbQ_OxRdtase_chain4L/K"/>
</dbReference>
<dbReference type="InterPro" id="IPR039428">
    <property type="entry name" value="NUOK/Mnh_C1-like"/>
</dbReference>
<dbReference type="PANTHER" id="PTHR11434:SF0">
    <property type="entry name" value="NADH-UBIQUINONE OXIDOREDUCTASE CHAIN 4L"/>
    <property type="match status" value="1"/>
</dbReference>
<dbReference type="PANTHER" id="PTHR11434">
    <property type="entry name" value="NADH-UBIQUINONE OXIDOREDUCTASE SUBUNIT ND4L"/>
    <property type="match status" value="1"/>
</dbReference>
<dbReference type="Pfam" id="PF00420">
    <property type="entry name" value="Oxidored_q2"/>
    <property type="match status" value="1"/>
</dbReference>
<evidence type="ECO:0000250" key="1">
    <source>
        <dbReference type="UniProtKB" id="P03901"/>
    </source>
</evidence>
<evidence type="ECO:0000250" key="2">
    <source>
        <dbReference type="UniProtKB" id="P03902"/>
    </source>
</evidence>
<evidence type="ECO:0000255" key="3"/>
<evidence type="ECO:0000305" key="4"/>
<organism>
    <name type="scientific">Pteropus dasymallus</name>
    <name type="common">Ryukyu flying fox</name>
    <dbReference type="NCBI Taxonomy" id="126282"/>
    <lineage>
        <taxon>Eukaryota</taxon>
        <taxon>Metazoa</taxon>
        <taxon>Chordata</taxon>
        <taxon>Craniata</taxon>
        <taxon>Vertebrata</taxon>
        <taxon>Euteleostomi</taxon>
        <taxon>Mammalia</taxon>
        <taxon>Eutheria</taxon>
        <taxon>Laurasiatheria</taxon>
        <taxon>Chiroptera</taxon>
        <taxon>Yinpterochiroptera</taxon>
        <taxon>Pteropodoidea</taxon>
        <taxon>Pteropodidae</taxon>
        <taxon>Pteropodinae</taxon>
        <taxon>Pteropus</taxon>
    </lineage>
</organism>
<protein>
    <recommendedName>
        <fullName>NADH-ubiquinone oxidoreductase chain 4L</fullName>
        <ecNumber>7.1.1.2</ecNumber>
    </recommendedName>
    <alternativeName>
        <fullName>NADH dehydrogenase subunit 4L</fullName>
    </alternativeName>
</protein>
<comment type="function">
    <text evidence="1">Core subunit of the mitochondrial membrane respiratory chain NADH dehydrogenase (Complex I) which catalyzes electron transfer from NADH through the respiratory chain, using ubiquinone as an electron acceptor. Part of the enzyme membrane arm which is embedded in the lipid bilayer and involved in proton translocation.</text>
</comment>
<comment type="catalytic activity">
    <reaction evidence="1">
        <text>a ubiquinone + NADH + 5 H(+)(in) = a ubiquinol + NAD(+) + 4 H(+)(out)</text>
        <dbReference type="Rhea" id="RHEA:29091"/>
        <dbReference type="Rhea" id="RHEA-COMP:9565"/>
        <dbReference type="Rhea" id="RHEA-COMP:9566"/>
        <dbReference type="ChEBI" id="CHEBI:15378"/>
        <dbReference type="ChEBI" id="CHEBI:16389"/>
        <dbReference type="ChEBI" id="CHEBI:17976"/>
        <dbReference type="ChEBI" id="CHEBI:57540"/>
        <dbReference type="ChEBI" id="CHEBI:57945"/>
        <dbReference type="EC" id="7.1.1.2"/>
    </reaction>
    <physiologicalReaction direction="left-to-right" evidence="1">
        <dbReference type="Rhea" id="RHEA:29092"/>
    </physiologicalReaction>
</comment>
<comment type="subunit">
    <text evidence="2">Core subunit of respiratory chain NADH dehydrogenase (Complex I) which is composed of 45 different subunits.</text>
</comment>
<comment type="subcellular location">
    <subcellularLocation>
        <location evidence="2">Mitochondrion inner membrane</location>
        <topology evidence="3">Multi-pass membrane protein</topology>
    </subcellularLocation>
</comment>
<comment type="similarity">
    <text evidence="4">Belongs to the complex I subunit 4L family.</text>
</comment>
<keyword id="KW-0249">Electron transport</keyword>
<keyword id="KW-0472">Membrane</keyword>
<keyword id="KW-0496">Mitochondrion</keyword>
<keyword id="KW-0999">Mitochondrion inner membrane</keyword>
<keyword id="KW-0520">NAD</keyword>
<keyword id="KW-0679">Respiratory chain</keyword>
<keyword id="KW-1278">Translocase</keyword>
<keyword id="KW-0812">Transmembrane</keyword>
<keyword id="KW-1133">Transmembrane helix</keyword>
<keyword id="KW-0813">Transport</keyword>
<keyword id="KW-0830">Ubiquinone</keyword>
<gene>
    <name type="primary">MT-ND4L</name>
    <name type="synonym">MTND4L</name>
    <name type="synonym">NADH4L</name>
    <name type="synonym">ND4L</name>
</gene>
<proteinExistence type="inferred from homology"/>